<feature type="chain" id="PRO_0000344654" description="Large ribosomal subunit protein bL36">
    <location>
        <begin position="1"/>
        <end position="45"/>
    </location>
</feature>
<feature type="region of interest" description="Disordered" evidence="2">
    <location>
        <begin position="1"/>
        <end position="45"/>
    </location>
</feature>
<organism>
    <name type="scientific">Chlamydia trachomatis serovar L2 (strain ATCC VR-902B / DSM 19102 / 434/Bu)</name>
    <dbReference type="NCBI Taxonomy" id="471472"/>
    <lineage>
        <taxon>Bacteria</taxon>
        <taxon>Pseudomonadati</taxon>
        <taxon>Chlamydiota</taxon>
        <taxon>Chlamydiia</taxon>
        <taxon>Chlamydiales</taxon>
        <taxon>Chlamydiaceae</taxon>
        <taxon>Chlamydia/Chlamydophila group</taxon>
        <taxon>Chlamydia</taxon>
    </lineage>
</organism>
<reference key="1">
    <citation type="journal article" date="2008" name="Genome Res.">
        <title>Chlamydia trachomatis: genome sequence analysis of lymphogranuloma venereum isolates.</title>
        <authorList>
            <person name="Thomson N.R."/>
            <person name="Holden M.T.G."/>
            <person name="Carder C."/>
            <person name="Lennard N."/>
            <person name="Lockey S.J."/>
            <person name="Marsh P."/>
            <person name="Skipp P."/>
            <person name="O'Connor C.D."/>
            <person name="Goodhead I."/>
            <person name="Norbertzcak H."/>
            <person name="Harris B."/>
            <person name="Ormond D."/>
            <person name="Rance R."/>
            <person name="Quail M.A."/>
            <person name="Parkhill J."/>
            <person name="Stephens R.S."/>
            <person name="Clarke I.N."/>
        </authorList>
    </citation>
    <scope>NUCLEOTIDE SEQUENCE [LARGE SCALE GENOMIC DNA]</scope>
    <source>
        <strain>ATCC VR-902B / DSM 19102 / 434/Bu</strain>
    </source>
</reference>
<protein>
    <recommendedName>
        <fullName evidence="1">Large ribosomal subunit protein bL36</fullName>
    </recommendedName>
    <alternativeName>
        <fullName evidence="3">50S ribosomal protein L36</fullName>
    </alternativeName>
</protein>
<sequence>MRVSSSIKADPSKGDKLVRRKGRLYVINKKDPNRKQRQAGPARKK</sequence>
<proteinExistence type="inferred from homology"/>
<accession>B0B912</accession>
<keyword id="KW-0687">Ribonucleoprotein</keyword>
<keyword id="KW-0689">Ribosomal protein</keyword>
<evidence type="ECO:0000255" key="1">
    <source>
        <dbReference type="HAMAP-Rule" id="MF_00251"/>
    </source>
</evidence>
<evidence type="ECO:0000256" key="2">
    <source>
        <dbReference type="SAM" id="MobiDB-lite"/>
    </source>
</evidence>
<evidence type="ECO:0000305" key="3"/>
<gene>
    <name evidence="1" type="primary">rpmJ</name>
    <name type="ordered locus">CTL0154</name>
</gene>
<comment type="similarity">
    <text evidence="1">Belongs to the bacterial ribosomal protein bL36 family.</text>
</comment>
<name>RL36_CHLT2</name>
<dbReference type="EMBL" id="AM884176">
    <property type="protein sequence ID" value="CAP03599.1"/>
    <property type="molecule type" value="Genomic_DNA"/>
</dbReference>
<dbReference type="RefSeq" id="WP_009872166.1">
    <property type="nucleotide sequence ID" value="NC_010287.1"/>
</dbReference>
<dbReference type="RefSeq" id="YP_001654246.1">
    <property type="nucleotide sequence ID" value="NC_010287.1"/>
</dbReference>
<dbReference type="SMR" id="B0B912"/>
<dbReference type="GeneID" id="93065661"/>
<dbReference type="KEGG" id="ctb:CTL0154"/>
<dbReference type="PATRIC" id="fig|471472.4.peg.168"/>
<dbReference type="HOGENOM" id="CLU_135723_3_3_0"/>
<dbReference type="PRO" id="PR:B0B912"/>
<dbReference type="Proteomes" id="UP001154402">
    <property type="component" value="Chromosome"/>
</dbReference>
<dbReference type="GO" id="GO:1990904">
    <property type="term" value="C:ribonucleoprotein complex"/>
    <property type="evidence" value="ECO:0007669"/>
    <property type="project" value="UniProtKB-KW"/>
</dbReference>
<dbReference type="GO" id="GO:0005840">
    <property type="term" value="C:ribosome"/>
    <property type="evidence" value="ECO:0007669"/>
    <property type="project" value="UniProtKB-KW"/>
</dbReference>
<dbReference type="GO" id="GO:0003735">
    <property type="term" value="F:structural constituent of ribosome"/>
    <property type="evidence" value="ECO:0007669"/>
    <property type="project" value="InterPro"/>
</dbReference>
<dbReference type="GO" id="GO:0006412">
    <property type="term" value="P:translation"/>
    <property type="evidence" value="ECO:0007669"/>
    <property type="project" value="UniProtKB-UniRule"/>
</dbReference>
<dbReference type="HAMAP" id="MF_00251">
    <property type="entry name" value="Ribosomal_bL36"/>
    <property type="match status" value="1"/>
</dbReference>
<dbReference type="InterPro" id="IPR000473">
    <property type="entry name" value="Ribosomal_bL36"/>
</dbReference>
<dbReference type="InterPro" id="IPR035977">
    <property type="entry name" value="Ribosomal_bL36_sp"/>
</dbReference>
<dbReference type="NCBIfam" id="TIGR01022">
    <property type="entry name" value="rpmJ_bact"/>
    <property type="match status" value="1"/>
</dbReference>
<dbReference type="Pfam" id="PF00444">
    <property type="entry name" value="Ribosomal_L36"/>
    <property type="match status" value="1"/>
</dbReference>
<dbReference type="SUPFAM" id="SSF57840">
    <property type="entry name" value="Ribosomal protein L36"/>
    <property type="match status" value="1"/>
</dbReference>
<dbReference type="PROSITE" id="PS00828">
    <property type="entry name" value="RIBOSOMAL_L36"/>
    <property type="match status" value="1"/>
</dbReference>